<proteinExistence type="inferred from homology"/>
<organism>
    <name type="scientific">Pseudomonas putida (strain ATCC 700007 / DSM 6899 / JCM 31910 / BCRC 17059 / LMG 24140 / F1)</name>
    <dbReference type="NCBI Taxonomy" id="351746"/>
    <lineage>
        <taxon>Bacteria</taxon>
        <taxon>Pseudomonadati</taxon>
        <taxon>Pseudomonadota</taxon>
        <taxon>Gammaproteobacteria</taxon>
        <taxon>Pseudomonadales</taxon>
        <taxon>Pseudomonadaceae</taxon>
        <taxon>Pseudomonas</taxon>
    </lineage>
</organism>
<protein>
    <recommendedName>
        <fullName evidence="1">3-octaprenyl-4-hydroxybenzoate carboxy-lyase</fullName>
        <ecNumber evidence="1">4.1.1.98</ecNumber>
    </recommendedName>
    <alternativeName>
        <fullName evidence="1">Polyprenyl p-hydroxybenzoate decarboxylase</fullName>
    </alternativeName>
</protein>
<comment type="function">
    <text evidence="1">Catalyzes the decarboxylation of 3-octaprenyl-4-hydroxy benzoate to 2-octaprenylphenol, an intermediate step in ubiquinone biosynthesis.</text>
</comment>
<comment type="catalytic activity">
    <reaction evidence="1">
        <text>a 4-hydroxy-3-(all-trans-polyprenyl)benzoate + H(+) = a 2-(all-trans-polyprenyl)phenol + CO2</text>
        <dbReference type="Rhea" id="RHEA:41680"/>
        <dbReference type="Rhea" id="RHEA-COMP:9514"/>
        <dbReference type="Rhea" id="RHEA-COMP:9516"/>
        <dbReference type="ChEBI" id="CHEBI:1269"/>
        <dbReference type="ChEBI" id="CHEBI:15378"/>
        <dbReference type="ChEBI" id="CHEBI:16526"/>
        <dbReference type="ChEBI" id="CHEBI:78396"/>
        <dbReference type="EC" id="4.1.1.98"/>
    </reaction>
</comment>
<comment type="cofactor">
    <cofactor evidence="1">
        <name>prenylated FMN</name>
        <dbReference type="ChEBI" id="CHEBI:87746"/>
    </cofactor>
    <text evidence="1">Binds 1 prenylated FMN per subunit.</text>
</comment>
<comment type="cofactor">
    <cofactor evidence="1">
        <name>Mn(2+)</name>
        <dbReference type="ChEBI" id="CHEBI:29035"/>
    </cofactor>
</comment>
<comment type="pathway">
    <text evidence="1">Cofactor biosynthesis; ubiquinone biosynthesis.</text>
</comment>
<comment type="subunit">
    <text evidence="1">Homohexamer.</text>
</comment>
<comment type="subcellular location">
    <subcellularLocation>
        <location evidence="1">Cell membrane</location>
        <topology evidence="1">Peripheral membrane protein</topology>
    </subcellularLocation>
</comment>
<comment type="similarity">
    <text evidence="1">Belongs to the UbiD family.</text>
</comment>
<dbReference type="EC" id="4.1.1.98" evidence="1"/>
<dbReference type="EMBL" id="CP000712">
    <property type="protein sequence ID" value="ABQ81240.1"/>
    <property type="molecule type" value="Genomic_DNA"/>
</dbReference>
<dbReference type="SMR" id="A5WAT0"/>
<dbReference type="KEGG" id="ppf:Pput_5122"/>
<dbReference type="eggNOG" id="COG0043">
    <property type="taxonomic scope" value="Bacteria"/>
</dbReference>
<dbReference type="HOGENOM" id="CLU_023348_4_1_6"/>
<dbReference type="UniPathway" id="UPA00232"/>
<dbReference type="GO" id="GO:0005829">
    <property type="term" value="C:cytosol"/>
    <property type="evidence" value="ECO:0007669"/>
    <property type="project" value="TreeGrafter"/>
</dbReference>
<dbReference type="GO" id="GO:0005886">
    <property type="term" value="C:plasma membrane"/>
    <property type="evidence" value="ECO:0007669"/>
    <property type="project" value="UniProtKB-SubCell"/>
</dbReference>
<dbReference type="GO" id="GO:0008694">
    <property type="term" value="F:3-octaprenyl-4-hydroxybenzoate carboxy-lyase activity"/>
    <property type="evidence" value="ECO:0007669"/>
    <property type="project" value="UniProtKB-UniRule"/>
</dbReference>
<dbReference type="GO" id="GO:0046872">
    <property type="term" value="F:metal ion binding"/>
    <property type="evidence" value="ECO:0007669"/>
    <property type="project" value="UniProtKB-KW"/>
</dbReference>
<dbReference type="GO" id="GO:0006744">
    <property type="term" value="P:ubiquinone biosynthetic process"/>
    <property type="evidence" value="ECO:0007669"/>
    <property type="project" value="UniProtKB-UniRule"/>
</dbReference>
<dbReference type="FunFam" id="1.20.5.570:FF:000001">
    <property type="entry name" value="3-octaprenyl-4-hydroxybenzoate carboxy-lyase"/>
    <property type="match status" value="1"/>
</dbReference>
<dbReference type="FunFam" id="3.40.1670.10:FF:000001">
    <property type="entry name" value="3-octaprenyl-4-hydroxybenzoate carboxy-lyase"/>
    <property type="match status" value="1"/>
</dbReference>
<dbReference type="Gene3D" id="1.20.5.570">
    <property type="entry name" value="Single helix bin"/>
    <property type="match status" value="1"/>
</dbReference>
<dbReference type="Gene3D" id="3.40.1670.10">
    <property type="entry name" value="UbiD C-terminal domain-like"/>
    <property type="match status" value="1"/>
</dbReference>
<dbReference type="HAMAP" id="MF_01636">
    <property type="entry name" value="UbiD"/>
    <property type="match status" value="1"/>
</dbReference>
<dbReference type="InterPro" id="IPR002830">
    <property type="entry name" value="UbiD"/>
</dbReference>
<dbReference type="InterPro" id="IPR049381">
    <property type="entry name" value="UbiD-like_C"/>
</dbReference>
<dbReference type="InterPro" id="IPR049383">
    <property type="entry name" value="UbiD-like_N"/>
</dbReference>
<dbReference type="InterPro" id="IPR023677">
    <property type="entry name" value="UbiD_bacteria"/>
</dbReference>
<dbReference type="InterPro" id="IPR048304">
    <property type="entry name" value="UbiD_Rift_dom"/>
</dbReference>
<dbReference type="NCBIfam" id="NF008175">
    <property type="entry name" value="PRK10922.1"/>
    <property type="match status" value="1"/>
</dbReference>
<dbReference type="NCBIfam" id="TIGR00148">
    <property type="entry name" value="UbiD family decarboxylase"/>
    <property type="match status" value="1"/>
</dbReference>
<dbReference type="PANTHER" id="PTHR30108">
    <property type="entry name" value="3-OCTAPRENYL-4-HYDROXYBENZOATE CARBOXY-LYASE-RELATED"/>
    <property type="match status" value="1"/>
</dbReference>
<dbReference type="PANTHER" id="PTHR30108:SF17">
    <property type="entry name" value="FERULIC ACID DECARBOXYLASE 1"/>
    <property type="match status" value="1"/>
</dbReference>
<dbReference type="Pfam" id="PF01977">
    <property type="entry name" value="UbiD"/>
    <property type="match status" value="1"/>
</dbReference>
<dbReference type="Pfam" id="PF20696">
    <property type="entry name" value="UbiD_C"/>
    <property type="match status" value="1"/>
</dbReference>
<dbReference type="Pfam" id="PF20695">
    <property type="entry name" value="UbiD_N"/>
    <property type="match status" value="1"/>
</dbReference>
<dbReference type="SUPFAM" id="SSF50475">
    <property type="entry name" value="FMN-binding split barrel"/>
    <property type="match status" value="1"/>
</dbReference>
<dbReference type="SUPFAM" id="SSF143968">
    <property type="entry name" value="UbiD C-terminal domain-like"/>
    <property type="match status" value="1"/>
</dbReference>
<feature type="chain" id="PRO_1000069856" description="3-octaprenyl-4-hydroxybenzoate carboxy-lyase">
    <location>
        <begin position="1"/>
        <end position="488"/>
    </location>
</feature>
<feature type="active site" description="Proton donor" evidence="1">
    <location>
        <position position="287"/>
    </location>
</feature>
<feature type="binding site" evidence="1">
    <location>
        <position position="172"/>
    </location>
    <ligand>
        <name>Mn(2+)</name>
        <dbReference type="ChEBI" id="CHEBI:29035"/>
    </ligand>
</feature>
<feature type="binding site" evidence="1">
    <location>
        <begin position="175"/>
        <end position="177"/>
    </location>
    <ligand>
        <name>prenylated FMN</name>
        <dbReference type="ChEBI" id="CHEBI:87746"/>
    </ligand>
</feature>
<feature type="binding site" evidence="1">
    <location>
        <begin position="189"/>
        <end position="191"/>
    </location>
    <ligand>
        <name>prenylated FMN</name>
        <dbReference type="ChEBI" id="CHEBI:87746"/>
    </ligand>
</feature>
<feature type="binding site" evidence="1">
    <location>
        <begin position="194"/>
        <end position="195"/>
    </location>
    <ligand>
        <name>prenylated FMN</name>
        <dbReference type="ChEBI" id="CHEBI:87746"/>
    </ligand>
</feature>
<feature type="binding site" evidence="1">
    <location>
        <position position="238"/>
    </location>
    <ligand>
        <name>Mn(2+)</name>
        <dbReference type="ChEBI" id="CHEBI:29035"/>
    </ligand>
</feature>
<keyword id="KW-1003">Cell membrane</keyword>
<keyword id="KW-0210">Decarboxylase</keyword>
<keyword id="KW-0285">Flavoprotein</keyword>
<keyword id="KW-0288">FMN</keyword>
<keyword id="KW-0456">Lyase</keyword>
<keyword id="KW-0464">Manganese</keyword>
<keyword id="KW-0472">Membrane</keyword>
<keyword id="KW-0479">Metal-binding</keyword>
<keyword id="KW-0831">Ubiquinone biosynthesis</keyword>
<reference key="1">
    <citation type="submission" date="2007-05" db="EMBL/GenBank/DDBJ databases">
        <title>Complete sequence of Pseudomonas putida F1.</title>
        <authorList>
            <consortium name="US DOE Joint Genome Institute"/>
            <person name="Copeland A."/>
            <person name="Lucas S."/>
            <person name="Lapidus A."/>
            <person name="Barry K."/>
            <person name="Detter J.C."/>
            <person name="Glavina del Rio T."/>
            <person name="Hammon N."/>
            <person name="Israni S."/>
            <person name="Dalin E."/>
            <person name="Tice H."/>
            <person name="Pitluck S."/>
            <person name="Chain P."/>
            <person name="Malfatti S."/>
            <person name="Shin M."/>
            <person name="Vergez L."/>
            <person name="Schmutz J."/>
            <person name="Larimer F."/>
            <person name="Land M."/>
            <person name="Hauser L."/>
            <person name="Kyrpides N."/>
            <person name="Lykidis A."/>
            <person name="Parales R."/>
            <person name="Richardson P."/>
        </authorList>
    </citation>
    <scope>NUCLEOTIDE SEQUENCE [LARGE SCALE GENOMIC DNA]</scope>
    <source>
        <strain>ATCC 700007 / DSM 6899 / JCM 31910 / BCRC 17059 / LMG 24140 / F1</strain>
    </source>
</reference>
<sequence>MQYRDLRDFIRGLEQRGELKRIQVPISPVLEMTEVCDRTLRAKGPALLFEKPTGFDIPVLGNLFGTPERVAMGMGAESVSELREIGKLLAFLKEPEPPKGLKDAWSKLPIFKKVVSMAPKVVKDAVCQEVVVEGDDVDLGTLPIQHCWPGDVAPLITWGLTVTRGPNKDRQNLGIYRQQVIGRNKVIMRWLSHRGGALDYREWCEKNPGQPFPVAVALGADPATILGAVTPVPDTLSEYAFAGLLRGNRTELVKCRGSNLQVPATAEIILEGVIHPGEMAPEGPYGDHTGYYNEVDSFPVFTVERITHRQKPIYHSTYTGRPPDEPAILGVALNEVFVPILQKQFPEITDFYLPPEGCSYRMAVVTMKKQYPGHAKRVMLGVWSFLRQFMYTKFVIVTDDDINARDWNDVIWAITTRMDPKRDTVMIDNTPIDYLDFASPVSGLGSKMGLDATHKWPGETTREWGRVIVKDEAVTRRIDELWDQLGID</sequence>
<accession>A5WAT0</accession>
<evidence type="ECO:0000255" key="1">
    <source>
        <dbReference type="HAMAP-Rule" id="MF_01636"/>
    </source>
</evidence>
<name>UBID_PSEP1</name>
<gene>
    <name evidence="1" type="primary">ubiD</name>
    <name type="ordered locus">Pput_5122</name>
</gene>